<sequence>MAKPILRIGSRKNTRSSSRKNVRRIPKGVIHVQASFNNTIVTVTDVRGRVISWSSAGTCGFRGTRRGTPFAAQTAAGNAIRAVVDQGMQRAEVRIKGPGLGRDAALRAIRRSGILLSFVRDVTPMPHNGCRPPKKRRV</sequence>
<keyword id="KW-0150">Chloroplast</keyword>
<keyword id="KW-0934">Plastid</keyword>
<keyword id="KW-0687">Ribonucleoprotein</keyword>
<keyword id="KW-0689">Ribosomal protein</keyword>
<keyword id="KW-0694">RNA-binding</keyword>
<keyword id="KW-0699">rRNA-binding</keyword>
<name>RR11_NASOF</name>
<comment type="subunit">
    <text evidence="1">Part of the 30S ribosomal subunit.</text>
</comment>
<comment type="subcellular location">
    <subcellularLocation>
        <location>Plastid</location>
        <location>Chloroplast</location>
    </subcellularLocation>
</comment>
<comment type="similarity">
    <text evidence="1">Belongs to the universal ribosomal protein uS11 family.</text>
</comment>
<accession>A4QLW6</accession>
<dbReference type="EMBL" id="AP009376">
    <property type="protein sequence ID" value="BAF50671.1"/>
    <property type="molecule type" value="Genomic_DNA"/>
</dbReference>
<dbReference type="RefSeq" id="YP_001123847.1">
    <property type="nucleotide sequence ID" value="NC_009275.1"/>
</dbReference>
<dbReference type="SMR" id="A4QLW6"/>
<dbReference type="GeneID" id="4962088"/>
<dbReference type="GO" id="GO:0009507">
    <property type="term" value="C:chloroplast"/>
    <property type="evidence" value="ECO:0007669"/>
    <property type="project" value="UniProtKB-SubCell"/>
</dbReference>
<dbReference type="GO" id="GO:1990904">
    <property type="term" value="C:ribonucleoprotein complex"/>
    <property type="evidence" value="ECO:0007669"/>
    <property type="project" value="UniProtKB-KW"/>
</dbReference>
<dbReference type="GO" id="GO:0005840">
    <property type="term" value="C:ribosome"/>
    <property type="evidence" value="ECO:0007669"/>
    <property type="project" value="UniProtKB-KW"/>
</dbReference>
<dbReference type="GO" id="GO:0019843">
    <property type="term" value="F:rRNA binding"/>
    <property type="evidence" value="ECO:0007669"/>
    <property type="project" value="UniProtKB-UniRule"/>
</dbReference>
<dbReference type="GO" id="GO:0003735">
    <property type="term" value="F:structural constituent of ribosome"/>
    <property type="evidence" value="ECO:0007669"/>
    <property type="project" value="InterPro"/>
</dbReference>
<dbReference type="GO" id="GO:0006412">
    <property type="term" value="P:translation"/>
    <property type="evidence" value="ECO:0007669"/>
    <property type="project" value="UniProtKB-UniRule"/>
</dbReference>
<dbReference type="FunFam" id="3.30.420.80:FF:000003">
    <property type="entry name" value="30S ribosomal protein S11, chloroplastic"/>
    <property type="match status" value="1"/>
</dbReference>
<dbReference type="Gene3D" id="3.30.420.80">
    <property type="entry name" value="Ribosomal protein S11"/>
    <property type="match status" value="1"/>
</dbReference>
<dbReference type="HAMAP" id="MF_01310">
    <property type="entry name" value="Ribosomal_uS11"/>
    <property type="match status" value="1"/>
</dbReference>
<dbReference type="InterPro" id="IPR001971">
    <property type="entry name" value="Ribosomal_uS11"/>
</dbReference>
<dbReference type="InterPro" id="IPR019981">
    <property type="entry name" value="Ribosomal_uS11_bac-type"/>
</dbReference>
<dbReference type="InterPro" id="IPR018102">
    <property type="entry name" value="Ribosomal_uS11_CS"/>
</dbReference>
<dbReference type="InterPro" id="IPR036967">
    <property type="entry name" value="Ribosomal_uS11_sf"/>
</dbReference>
<dbReference type="NCBIfam" id="NF003698">
    <property type="entry name" value="PRK05309.1"/>
    <property type="match status" value="1"/>
</dbReference>
<dbReference type="NCBIfam" id="TIGR03632">
    <property type="entry name" value="uS11_bact"/>
    <property type="match status" value="1"/>
</dbReference>
<dbReference type="PANTHER" id="PTHR11759">
    <property type="entry name" value="40S RIBOSOMAL PROTEIN S14/30S RIBOSOMAL PROTEIN S11"/>
    <property type="match status" value="1"/>
</dbReference>
<dbReference type="Pfam" id="PF00411">
    <property type="entry name" value="Ribosomal_S11"/>
    <property type="match status" value="1"/>
</dbReference>
<dbReference type="PIRSF" id="PIRSF002131">
    <property type="entry name" value="Ribosomal_S11"/>
    <property type="match status" value="1"/>
</dbReference>
<dbReference type="SUPFAM" id="SSF53137">
    <property type="entry name" value="Translational machinery components"/>
    <property type="match status" value="1"/>
</dbReference>
<dbReference type="PROSITE" id="PS00054">
    <property type="entry name" value="RIBOSOMAL_S11"/>
    <property type="match status" value="1"/>
</dbReference>
<gene>
    <name evidence="1" type="primary">rps11</name>
</gene>
<evidence type="ECO:0000255" key="1">
    <source>
        <dbReference type="HAMAP-Rule" id="MF_01310"/>
    </source>
</evidence>
<evidence type="ECO:0000256" key="2">
    <source>
        <dbReference type="SAM" id="MobiDB-lite"/>
    </source>
</evidence>
<evidence type="ECO:0000305" key="3"/>
<proteinExistence type="inferred from homology"/>
<organism>
    <name type="scientific">Nasturtium officinale</name>
    <name type="common">Watercress</name>
    <name type="synonym">Rorippa nasturtium-aquaticum</name>
    <dbReference type="NCBI Taxonomy" id="65948"/>
    <lineage>
        <taxon>Eukaryota</taxon>
        <taxon>Viridiplantae</taxon>
        <taxon>Streptophyta</taxon>
        <taxon>Embryophyta</taxon>
        <taxon>Tracheophyta</taxon>
        <taxon>Spermatophyta</taxon>
        <taxon>Magnoliopsida</taxon>
        <taxon>eudicotyledons</taxon>
        <taxon>Gunneridae</taxon>
        <taxon>Pentapetalae</taxon>
        <taxon>rosids</taxon>
        <taxon>malvids</taxon>
        <taxon>Brassicales</taxon>
        <taxon>Brassicaceae</taxon>
        <taxon>Cardamineae</taxon>
        <taxon>Nasturtium</taxon>
    </lineage>
</organism>
<protein>
    <recommendedName>
        <fullName evidence="1">Small ribosomal subunit protein uS11c</fullName>
    </recommendedName>
    <alternativeName>
        <fullName evidence="3">30S ribosomal protein S11, chloroplastic</fullName>
    </alternativeName>
</protein>
<geneLocation type="chloroplast"/>
<reference key="1">
    <citation type="submission" date="2007-03" db="EMBL/GenBank/DDBJ databases">
        <title>Sequencing analysis of Nasturtium officinale chloroplast DNA.</title>
        <authorList>
            <person name="Hosouchi T."/>
            <person name="Tsuruoka H."/>
            <person name="Kotani H."/>
        </authorList>
    </citation>
    <scope>NUCLEOTIDE SEQUENCE [LARGE SCALE GENOMIC DNA]</scope>
</reference>
<feature type="chain" id="PRO_0000294922" description="Small ribosomal subunit protein uS11c">
    <location>
        <begin position="1"/>
        <end position="138"/>
    </location>
</feature>
<feature type="region of interest" description="Disordered" evidence="2">
    <location>
        <begin position="1"/>
        <end position="23"/>
    </location>
</feature>
<feature type="compositionally biased region" description="Basic residues" evidence="2">
    <location>
        <begin position="9"/>
        <end position="23"/>
    </location>
</feature>